<organism>
    <name type="scientific">Pan troglodytes</name>
    <name type="common">Chimpanzee</name>
    <dbReference type="NCBI Taxonomy" id="9598"/>
    <lineage>
        <taxon>Eukaryota</taxon>
        <taxon>Metazoa</taxon>
        <taxon>Chordata</taxon>
        <taxon>Craniata</taxon>
        <taxon>Vertebrata</taxon>
        <taxon>Euteleostomi</taxon>
        <taxon>Mammalia</taxon>
        <taxon>Eutheria</taxon>
        <taxon>Euarchontoglires</taxon>
        <taxon>Primates</taxon>
        <taxon>Haplorrhini</taxon>
        <taxon>Catarrhini</taxon>
        <taxon>Hominidae</taxon>
        <taxon>Pan</taxon>
    </lineage>
</organism>
<accession>Q5IS42</accession>
<feature type="signal peptide" evidence="5">
    <location>
        <begin position="1"/>
        <end position="20"/>
    </location>
</feature>
<feature type="chain" id="PRO_0000036160" description="Ly-6/neurotoxin-like protein 1" evidence="5">
    <location>
        <begin position="21"/>
        <end position="92"/>
    </location>
</feature>
<feature type="propeptide" id="PRO_0000440644" description="Removed in mature form" evidence="5">
    <location>
        <begin position="93"/>
        <end position="116"/>
    </location>
</feature>
<feature type="domain" description="UPAR/Ly6" evidence="5">
    <location>
        <begin position="21"/>
        <end position="105"/>
    </location>
</feature>
<feature type="lipid moiety-binding region" description="GPI-anchor amidated asparagine" evidence="5">
    <location>
        <position position="92"/>
    </location>
</feature>
<feature type="disulfide bond" evidence="1">
    <location>
        <begin position="23"/>
        <end position="46"/>
    </location>
</feature>
<feature type="disulfide bond" evidence="1">
    <location>
        <begin position="26"/>
        <end position="33"/>
    </location>
</feature>
<feature type="disulfide bond" evidence="1">
    <location>
        <begin position="39"/>
        <end position="64"/>
    </location>
</feature>
<feature type="disulfide bond" evidence="1">
    <location>
        <begin position="68"/>
        <end position="85"/>
    </location>
</feature>
<feature type="disulfide bond" evidence="1">
    <location>
        <begin position="86"/>
        <end position="91"/>
    </location>
</feature>
<reference key="1">
    <citation type="journal article" date="2004" name="Cell">
        <title>Accelerated evolution of nervous system genes in the origin of Homo sapiens.</title>
        <authorList>
            <person name="Dorus S."/>
            <person name="Vallender E.J."/>
            <person name="Evans P.D."/>
            <person name="Anderson J.R."/>
            <person name="Gilbert S.L."/>
            <person name="Mahowald M."/>
            <person name="Wyckoff G.J."/>
            <person name="Malcom C.M."/>
            <person name="Lahn B.T."/>
        </authorList>
    </citation>
    <scope>NUCLEOTIDE SEQUENCE [MRNA]</scope>
</reference>
<proteinExistence type="inferred from homology"/>
<gene>
    <name evidence="3" type="primary">LYNX1</name>
</gene>
<comment type="function">
    <text evidence="1 2">Acts in different tissues through interaction to nicotinic acetylcholine receptors (nAChRs). The proposed role as modulator of nAChR activity seems to be dependent on the nAChR subtype and stoichiometry, and to involve an effect on nAChR trafficking and its cell surface expression, and on single channel properties of the nAChR inserted in the plasma membrane. Modulates functional properties of nicotinic acetylcholine receptors (nAChRs) to prevent excessive excitation, and hence neurodegeneration. Enhances desensitization by increasing both the rate and extent of desensitization of alpha-4:beta-2-containing nAChRs and slowing recovery from desensitization. Promotes large amplitude ACh-evoked currents through alpha-4:beta-2 nAChRs. Is involved in regulation of the nAChR pentameric assembly in the endoplasmic reticulum. Shifts stoichiometry from high sensitivity alpha-4(2):beta-2(3) to low sensitivity alpha-4(3):beta-2(2) nAChR. In vitro modulates alpha-3:beta-4-containing nAChRs. Reduces cell surface expression of (alpha-3:beta-4)(2):beta-4 and (alpha-3:beta-4)(2):alpha-5 nAChRs suggesting an interaction with nAChR alpha-3(-):(+)beta-4 subunit interfaces and an allosteric mode. Corresponding single channel effects characterized by decreased unitary conductance, altered burst proportions and enhanced desensitization/inactivation seem to depend on nAChR alpha:alpha subunit interfaces and are greater in (alpha-3:beta-2)(2):alpha-3 when compared to (alpha-3:beta-2)(2):alpha-5 nAChRs. Prevents plasticity in the primary visual cortex late in life.</text>
</comment>
<comment type="subunit">
    <text evidence="1 2">Interacts with nAChRs containing alpha-4:beta-2 (CHRNA4:CHRNB2) and alpha-7 (CHRNA7) subunits. Interacts with CHRNA4 probably in the endoplasmic reticulum prior to nAChR pentameric assembly (By similarity). Interacts with KCNA2/Potassium voltage-gated channel subfamily A member 2 (By similarity).</text>
</comment>
<comment type="subcellular location">
    <subcellularLocation>
        <location evidence="5">Cell membrane</location>
        <topology evidence="5">Lipid-anchor</topology>
        <topology evidence="5">GPI-anchor</topology>
    </subcellularLocation>
    <subcellularLocation>
        <location evidence="2">Cell projection</location>
        <location evidence="2">Dendrite</location>
    </subcellularLocation>
    <subcellularLocation>
        <location evidence="2">Endoplasmic reticulum</location>
    </subcellularLocation>
    <text evidence="4">Detected in Purkinje cells soma and proximal dendrites.</text>
</comment>
<sequence length="116" mass="12611">MTPLLTLILVVLMGLPLAQALDCHVCAYNGDNCFNPMRCPAMVAYCMTTRTYYTPTRMKVSKSCVPRCFETVYDGYSKHASTTSCCQYDLCNGAGLATPATLALAPILLATLWGLL</sequence>
<protein>
    <recommendedName>
        <fullName evidence="6">Ly-6/neurotoxin-like protein 1</fullName>
    </recommendedName>
</protein>
<dbReference type="EMBL" id="AY665286">
    <property type="protein sequence ID" value="AAV74324.1"/>
    <property type="molecule type" value="mRNA"/>
</dbReference>
<dbReference type="RefSeq" id="NP_001012437.1">
    <property type="nucleotide sequence ID" value="NM_001012435.1"/>
</dbReference>
<dbReference type="RefSeq" id="XP_009454346.1">
    <property type="nucleotide sequence ID" value="XM_009456071.4"/>
</dbReference>
<dbReference type="RefSeq" id="XP_009454347.1">
    <property type="nucleotide sequence ID" value="XM_009456072.4"/>
</dbReference>
<dbReference type="RefSeq" id="XP_009454348.1">
    <property type="nucleotide sequence ID" value="XM_009456073.4"/>
</dbReference>
<dbReference type="RefSeq" id="XP_054512381.1">
    <property type="nucleotide sequence ID" value="XM_054656406.2"/>
</dbReference>
<dbReference type="BMRB" id="Q5IS42"/>
<dbReference type="SMR" id="Q5IS42"/>
<dbReference type="FunCoup" id="Q5IS42">
    <property type="interactions" value="368"/>
</dbReference>
<dbReference type="STRING" id="9598.ENSPTRP00000035291"/>
<dbReference type="PaxDb" id="9598-ENSPTRP00000035291"/>
<dbReference type="Ensembl" id="ENSPTRT00000038174.4">
    <property type="protein sequence ID" value="ENSPTRP00000035291.3"/>
    <property type="gene ID" value="ENSPTRG00000020640.7"/>
</dbReference>
<dbReference type="GeneID" id="464434"/>
<dbReference type="CTD" id="66004"/>
<dbReference type="VGNC" id="VGNC:108097">
    <property type="gene designation" value="LYNX1"/>
</dbReference>
<dbReference type="eggNOG" id="ENOG502SD2S">
    <property type="taxonomic scope" value="Eukaryota"/>
</dbReference>
<dbReference type="GeneTree" id="ENSGT00730000111571"/>
<dbReference type="HOGENOM" id="CLU_161471_0_1_1"/>
<dbReference type="InParanoid" id="Q5IS42"/>
<dbReference type="OMA" id="YTPYRMK"/>
<dbReference type="TreeFam" id="TF336080"/>
<dbReference type="Proteomes" id="UP000002277">
    <property type="component" value="Chromosome 8"/>
</dbReference>
<dbReference type="Bgee" id="ENSPTRG00000020640">
    <property type="expression patterns" value="Expressed in dorsolateral prefrontal cortex and 14 other cell types or tissues"/>
</dbReference>
<dbReference type="GO" id="GO:0030425">
    <property type="term" value="C:dendrite"/>
    <property type="evidence" value="ECO:0007669"/>
    <property type="project" value="UniProtKB-SubCell"/>
</dbReference>
<dbReference type="GO" id="GO:0005783">
    <property type="term" value="C:endoplasmic reticulum"/>
    <property type="evidence" value="ECO:0007669"/>
    <property type="project" value="UniProtKB-SubCell"/>
</dbReference>
<dbReference type="GO" id="GO:0005886">
    <property type="term" value="C:plasma membrane"/>
    <property type="evidence" value="ECO:0000318"/>
    <property type="project" value="GO_Central"/>
</dbReference>
<dbReference type="GO" id="GO:0098552">
    <property type="term" value="C:side of membrane"/>
    <property type="evidence" value="ECO:0007669"/>
    <property type="project" value="UniProtKB-KW"/>
</dbReference>
<dbReference type="GO" id="GO:0045202">
    <property type="term" value="C:synapse"/>
    <property type="evidence" value="ECO:0007669"/>
    <property type="project" value="GOC"/>
</dbReference>
<dbReference type="GO" id="GO:0033130">
    <property type="term" value="F:acetylcholine receptor binding"/>
    <property type="evidence" value="ECO:0000250"/>
    <property type="project" value="UniProtKB"/>
</dbReference>
<dbReference type="GO" id="GO:0030550">
    <property type="term" value="F:acetylcholine receptor inhibitor activity"/>
    <property type="evidence" value="ECO:0000318"/>
    <property type="project" value="GO_Central"/>
</dbReference>
<dbReference type="GO" id="GO:0030548">
    <property type="term" value="F:acetylcholine receptor regulator activity"/>
    <property type="evidence" value="ECO:0000250"/>
    <property type="project" value="UniProtKB"/>
</dbReference>
<dbReference type="GO" id="GO:0008200">
    <property type="term" value="F:ion channel inhibitor activity"/>
    <property type="evidence" value="ECO:0007669"/>
    <property type="project" value="Ensembl"/>
</dbReference>
<dbReference type="GO" id="GO:0095500">
    <property type="term" value="P:acetylcholine receptor signaling pathway"/>
    <property type="evidence" value="ECO:0000318"/>
    <property type="project" value="GO_Central"/>
</dbReference>
<dbReference type="GO" id="GO:0099601">
    <property type="term" value="P:regulation of neurotransmitter receptor activity"/>
    <property type="evidence" value="ECO:0000250"/>
    <property type="project" value="UniProtKB"/>
</dbReference>
<dbReference type="GO" id="GO:0007271">
    <property type="term" value="P:synaptic transmission, cholinergic"/>
    <property type="evidence" value="ECO:0007669"/>
    <property type="project" value="Ensembl"/>
</dbReference>
<dbReference type="CDD" id="cd23585">
    <property type="entry name" value="TFP_LU_ECD_LYNX1"/>
    <property type="match status" value="1"/>
</dbReference>
<dbReference type="FunFam" id="2.10.60.10:FF:000003">
    <property type="entry name" value="lymphocyte antigen 6E isoform X1"/>
    <property type="match status" value="1"/>
</dbReference>
<dbReference type="Gene3D" id="2.10.60.10">
    <property type="entry name" value="CD59"/>
    <property type="match status" value="1"/>
</dbReference>
<dbReference type="InterPro" id="IPR051110">
    <property type="entry name" value="Ly-6/neurotoxin-like_GPI-ap"/>
</dbReference>
<dbReference type="InterPro" id="IPR016054">
    <property type="entry name" value="LY6_UPA_recep-like"/>
</dbReference>
<dbReference type="InterPro" id="IPR045860">
    <property type="entry name" value="Snake_toxin-like_sf"/>
</dbReference>
<dbReference type="InterPro" id="IPR035076">
    <property type="entry name" value="Toxin/TOLIP"/>
</dbReference>
<dbReference type="PANTHER" id="PTHR16983:SF27">
    <property type="entry name" value="LY-6_NEUROTOXIN-LIKE PROTEIN 1"/>
    <property type="match status" value="1"/>
</dbReference>
<dbReference type="PANTHER" id="PTHR16983">
    <property type="entry name" value="UPAR/LY6 DOMAIN-CONTAINING PROTEIN"/>
    <property type="match status" value="1"/>
</dbReference>
<dbReference type="Pfam" id="PF00087">
    <property type="entry name" value="Toxin_TOLIP"/>
    <property type="match status" value="1"/>
</dbReference>
<dbReference type="SMART" id="SM00134">
    <property type="entry name" value="LU"/>
    <property type="match status" value="1"/>
</dbReference>
<dbReference type="SUPFAM" id="SSF57302">
    <property type="entry name" value="Snake toxin-like"/>
    <property type="match status" value="1"/>
</dbReference>
<name>LYNX1_PANTR</name>
<evidence type="ECO:0000250" key="1">
    <source>
        <dbReference type="UniProtKB" id="P0DP58"/>
    </source>
</evidence>
<evidence type="ECO:0000250" key="2">
    <source>
        <dbReference type="UniProtKB" id="P0DP60"/>
    </source>
</evidence>
<evidence type="ECO:0000250" key="3">
    <source>
        <dbReference type="UniProtKB" id="Q9BZG9"/>
    </source>
</evidence>
<evidence type="ECO:0000250" key="4">
    <source>
        <dbReference type="UniProtKB" id="Q9WVC2"/>
    </source>
</evidence>
<evidence type="ECO:0000255" key="5"/>
<evidence type="ECO:0000305" key="6"/>
<keyword id="KW-1003">Cell membrane</keyword>
<keyword id="KW-0966">Cell projection</keyword>
<keyword id="KW-1015">Disulfide bond</keyword>
<keyword id="KW-0256">Endoplasmic reticulum</keyword>
<keyword id="KW-0325">Glycoprotein</keyword>
<keyword id="KW-0336">GPI-anchor</keyword>
<keyword id="KW-0449">Lipoprotein</keyword>
<keyword id="KW-0472">Membrane</keyword>
<keyword id="KW-1185">Reference proteome</keyword>
<keyword id="KW-0732">Signal</keyword>